<comment type="function">
    <text evidence="3">Putative pheromone receptor implicated in the regulation of social and reproductive behavior.</text>
</comment>
<comment type="subcellular location">
    <subcellularLocation>
        <location evidence="4">Cell membrane</location>
        <topology evidence="1">Multi-pass membrane protein</topology>
    </subcellularLocation>
</comment>
<comment type="disruption phenotype">
    <text evidence="3">Mice lacking all but one V1ra and V1rb gene (12% of the V1r repertoire) show a lack of chemosensory response to a subset of known pheromonal ligands and changes in maternal aggression as well as male reproductive behavior.</text>
</comment>
<comment type="similarity">
    <text evidence="2">Belongs to the G-protein coupled receptor 1 family.</text>
</comment>
<sequence length="302" mass="34263">MNENSRLHTHSNIRNTFFSEIGIGISGNSFLLLFHIIKFFRGHRPRLTDLPIGLLSLIHLLMLLVAAVIATDIFISWRGWNDIICKFLVYLYRSLRGLSLCTTSMLSVLQAIILSPRSYCLAKFKRKSSHNISCAIIFLSVLYMSISSHLLISITATPNLTMNDFLYVSQSCSLLPLSYLMQSIYSTLLVLREVFLIGLMVLSTSYMVALLYMHRKQAQNLQGTSLSLKASAEQRATQTILMLMTFFVLMSIFDSIVSCSRTMFLDDPTSYSIHIFVMHIYATVSPFVFISTEKHIVNILRG</sequence>
<protein>
    <recommendedName>
        <fullName>Vomeronasal type-1 receptor 48</fullName>
    </recommendedName>
    <alternativeName>
        <fullName>Vomeronasal type-1 receptor A3</fullName>
    </alternativeName>
    <alternativeName>
        <fullName>Vomeronasal type-1 receptor A6</fullName>
    </alternativeName>
</protein>
<organism>
    <name type="scientific">Mus musculus</name>
    <name type="common">Mouse</name>
    <dbReference type="NCBI Taxonomy" id="10090"/>
    <lineage>
        <taxon>Eukaryota</taxon>
        <taxon>Metazoa</taxon>
        <taxon>Chordata</taxon>
        <taxon>Craniata</taxon>
        <taxon>Vertebrata</taxon>
        <taxon>Euteleostomi</taxon>
        <taxon>Mammalia</taxon>
        <taxon>Eutheria</taxon>
        <taxon>Euarchontoglires</taxon>
        <taxon>Glires</taxon>
        <taxon>Rodentia</taxon>
        <taxon>Myomorpha</taxon>
        <taxon>Muroidea</taxon>
        <taxon>Muridae</taxon>
        <taxon>Murinae</taxon>
        <taxon>Mus</taxon>
        <taxon>Mus</taxon>
    </lineage>
</organism>
<gene>
    <name type="primary">Vmn1r48</name>
    <name type="synonym">V1ra3</name>
    <name evidence="6" type="synonym">V1ra6</name>
</gene>
<evidence type="ECO:0000255" key="1"/>
<evidence type="ECO:0000255" key="2">
    <source>
        <dbReference type="PROSITE-ProRule" id="PRU00521"/>
    </source>
</evidence>
<evidence type="ECO:0000269" key="3">
    <source>
    </source>
</evidence>
<evidence type="ECO:0000305" key="4"/>
<evidence type="ECO:0000312" key="5">
    <source>
        <dbReference type="EMBL" id="AAG42076.1"/>
    </source>
</evidence>
<evidence type="ECO:0000312" key="6">
    <source>
        <dbReference type="EMBL" id="BAB79212.1"/>
    </source>
</evidence>
<accession>Q9EQ52</accession>
<proteinExistence type="inferred from homology"/>
<keyword id="KW-1003">Cell membrane</keyword>
<keyword id="KW-1015">Disulfide bond</keyword>
<keyword id="KW-0297">G-protein coupled receptor</keyword>
<keyword id="KW-0325">Glycoprotein</keyword>
<keyword id="KW-0472">Membrane</keyword>
<keyword id="KW-0589">Pheromone response</keyword>
<keyword id="KW-0675">Receptor</keyword>
<keyword id="KW-1185">Reference proteome</keyword>
<keyword id="KW-0807">Transducer</keyword>
<keyword id="KW-0812">Transmembrane</keyword>
<keyword id="KW-1133">Transmembrane helix</keyword>
<name>V1R48_MOUSE</name>
<feature type="chain" id="PRO_0000239958" description="Vomeronasal type-1 receptor 48">
    <location>
        <begin position="1"/>
        <end position="302"/>
    </location>
</feature>
<feature type="topological domain" description="Extracellular" evidence="1">
    <location>
        <begin position="1"/>
        <end position="16"/>
    </location>
</feature>
<feature type="transmembrane region" description="Helical; Name=1" evidence="1">
    <location>
        <begin position="17"/>
        <end position="37"/>
    </location>
</feature>
<feature type="topological domain" description="Cytoplasmic" evidence="1">
    <location>
        <begin position="38"/>
        <end position="49"/>
    </location>
</feature>
<feature type="transmembrane region" description="Helical; Name=2" evidence="1">
    <location>
        <begin position="50"/>
        <end position="70"/>
    </location>
</feature>
<feature type="topological domain" description="Extracellular" evidence="1">
    <location>
        <begin position="71"/>
        <end position="91"/>
    </location>
</feature>
<feature type="transmembrane region" description="Helical; Name=3" evidence="1">
    <location>
        <begin position="92"/>
        <end position="114"/>
    </location>
</feature>
<feature type="topological domain" description="Cytoplasmic" evidence="1">
    <location>
        <begin position="115"/>
        <end position="131"/>
    </location>
</feature>
<feature type="transmembrane region" description="Helical; Name=4" evidence="1">
    <location>
        <begin position="132"/>
        <end position="152"/>
    </location>
</feature>
<feature type="topological domain" description="Extracellular" evidence="1">
    <location>
        <begin position="153"/>
        <end position="193"/>
    </location>
</feature>
<feature type="transmembrane region" description="Helical; Name=5" evidence="1">
    <location>
        <begin position="194"/>
        <end position="214"/>
    </location>
</feature>
<feature type="topological domain" description="Cytoplasmic" evidence="1">
    <location>
        <begin position="215"/>
        <end position="238"/>
    </location>
</feature>
<feature type="transmembrane region" description="Helical; Name=6" evidence="1">
    <location>
        <begin position="239"/>
        <end position="259"/>
    </location>
</feature>
<feature type="topological domain" description="Extracellular" evidence="1">
    <location>
        <begin position="260"/>
        <end position="269"/>
    </location>
</feature>
<feature type="transmembrane region" description="Helical; Name=7" evidence="1">
    <location>
        <begin position="270"/>
        <end position="290"/>
    </location>
</feature>
<feature type="topological domain" description="Cytoplasmic" evidence="1">
    <location>
        <begin position="291"/>
        <end position="302"/>
    </location>
</feature>
<feature type="glycosylation site" description="N-linked (GlcNAc...) asparagine" evidence="1">
    <location>
        <position position="159"/>
    </location>
</feature>
<feature type="disulfide bond" evidence="2">
    <location>
        <begin position="85"/>
        <end position="172"/>
    </location>
</feature>
<reference evidence="5" key="1">
    <citation type="journal article" date="2000" name="Genome Res.">
        <title>Sequence diversity and genomic organization of vomeronasal receptor genes in the mouse.</title>
        <authorList>
            <person name="Del Punta K."/>
            <person name="Rothman A."/>
            <person name="Rodriguez I."/>
            <person name="Mombaerts P."/>
        </authorList>
    </citation>
    <scope>NUCLEOTIDE SEQUENCE [GENOMIC DNA]</scope>
    <source>
        <strain evidence="5">129/SvJ</strain>
    </source>
</reference>
<reference evidence="6" key="2">
    <citation type="submission" date="2001-06" db="EMBL/GenBank/DDBJ databases">
        <title>Vomeronasal receptor gene diversity in the mammalian genome.</title>
        <authorList>
            <person name="Sam M."/>
            <person name="Matsunami H."/>
            <person name="Buck L."/>
        </authorList>
    </citation>
    <scope>NUCLEOTIDE SEQUENCE [GENOMIC DNA]</scope>
</reference>
<reference evidence="4" key="3">
    <citation type="journal article" date="2002" name="Nature">
        <title>Deficient pheromone responses in mice lacking a cluster of vomeronasal receptor genes.</title>
        <authorList>
            <person name="Del Punta K."/>
            <person name="Leinders-Zufall T."/>
            <person name="Rodriguez I."/>
            <person name="Jukam D."/>
            <person name="Wysocki C.J."/>
            <person name="Ogawa S."/>
            <person name="Zufall F."/>
            <person name="Mombaerts P."/>
        </authorList>
    </citation>
    <scope>PUTATIVE FUNCTION</scope>
    <scope>DISRUPTION PHENOTYPE</scope>
</reference>
<dbReference type="EMBL" id="AF291482">
    <property type="protein sequence ID" value="AAG42076.1"/>
    <property type="molecule type" value="Genomic_DNA"/>
</dbReference>
<dbReference type="EMBL" id="AB062894">
    <property type="protein sequence ID" value="BAB79212.1"/>
    <property type="molecule type" value="Genomic_DNA"/>
</dbReference>
<dbReference type="CCDS" id="CCDS20350.1"/>
<dbReference type="RefSeq" id="NP_444448.1">
    <property type="nucleotide sequence ID" value="NM_053218.1"/>
</dbReference>
<dbReference type="SMR" id="Q9EQ52"/>
<dbReference type="GlyCosmos" id="Q9EQ52">
    <property type="glycosylation" value="1 site, No reported glycans"/>
</dbReference>
<dbReference type="GlyGen" id="Q9EQ52">
    <property type="glycosylation" value="1 site"/>
</dbReference>
<dbReference type="PaxDb" id="10090-ENSMUSP00000073121"/>
<dbReference type="DNASU" id="113845"/>
<dbReference type="Ensembl" id="ENSMUST00000073415.2">
    <property type="protein sequence ID" value="ENSMUSP00000073121.2"/>
    <property type="gene ID" value="ENSMUSG00000057592.2"/>
</dbReference>
<dbReference type="GeneID" id="113845"/>
<dbReference type="KEGG" id="mmu:113845"/>
<dbReference type="UCSC" id="uc009cws.1">
    <property type="organism name" value="mouse"/>
</dbReference>
<dbReference type="AGR" id="MGI:2148508"/>
<dbReference type="CTD" id="113845"/>
<dbReference type="MGI" id="MGI:2148508">
    <property type="gene designation" value="Vmn1r48"/>
</dbReference>
<dbReference type="VEuPathDB" id="HostDB:ENSMUSG00000057592"/>
<dbReference type="eggNOG" id="ENOG502SNRJ">
    <property type="taxonomic scope" value="Eukaryota"/>
</dbReference>
<dbReference type="GeneTree" id="ENSGT01030000234553"/>
<dbReference type="HOGENOM" id="CLU_058641_0_0_1"/>
<dbReference type="InParanoid" id="Q9EQ52"/>
<dbReference type="OMA" id="ATHISMM"/>
<dbReference type="OrthoDB" id="9620038at2759"/>
<dbReference type="PhylomeDB" id="Q9EQ52"/>
<dbReference type="BioGRID-ORCS" id="113845">
    <property type="hits" value="2 hits in 38 CRISPR screens"/>
</dbReference>
<dbReference type="PRO" id="PR:Q9EQ52"/>
<dbReference type="Proteomes" id="UP000000589">
    <property type="component" value="Chromosome 6"/>
</dbReference>
<dbReference type="RNAct" id="Q9EQ52">
    <property type="molecule type" value="protein"/>
</dbReference>
<dbReference type="GO" id="GO:0005886">
    <property type="term" value="C:plasma membrane"/>
    <property type="evidence" value="ECO:0007669"/>
    <property type="project" value="UniProtKB-SubCell"/>
</dbReference>
<dbReference type="GO" id="GO:0016503">
    <property type="term" value="F:pheromone receptor activity"/>
    <property type="evidence" value="ECO:0007669"/>
    <property type="project" value="InterPro"/>
</dbReference>
<dbReference type="GO" id="GO:0019236">
    <property type="term" value="P:response to pheromone"/>
    <property type="evidence" value="ECO:0007669"/>
    <property type="project" value="UniProtKB-KW"/>
</dbReference>
<dbReference type="GO" id="GO:0007606">
    <property type="term" value="P:sensory perception of chemical stimulus"/>
    <property type="evidence" value="ECO:0000304"/>
    <property type="project" value="MGI"/>
</dbReference>
<dbReference type="CDD" id="cd13949">
    <property type="entry name" value="7tm_V1R_pheromone"/>
    <property type="match status" value="1"/>
</dbReference>
<dbReference type="FunFam" id="1.20.1070.10:FF:000051">
    <property type="entry name" value="Vomeronasal type-1 receptor"/>
    <property type="match status" value="1"/>
</dbReference>
<dbReference type="Gene3D" id="1.20.1070.10">
    <property type="entry name" value="Rhodopsin 7-helix transmembrane proteins"/>
    <property type="match status" value="1"/>
</dbReference>
<dbReference type="InterPro" id="IPR017452">
    <property type="entry name" value="GPCR_Rhodpsn_7TM"/>
</dbReference>
<dbReference type="InterPro" id="IPR004072">
    <property type="entry name" value="Vmron_rcpt_1"/>
</dbReference>
<dbReference type="PANTHER" id="PTHR24062">
    <property type="entry name" value="VOMERONASAL TYPE-1 RECEPTOR"/>
    <property type="match status" value="1"/>
</dbReference>
<dbReference type="Pfam" id="PF03402">
    <property type="entry name" value="V1R"/>
    <property type="match status" value="1"/>
</dbReference>
<dbReference type="PRINTS" id="PR01534">
    <property type="entry name" value="VOMERONASL1R"/>
</dbReference>
<dbReference type="SUPFAM" id="SSF81321">
    <property type="entry name" value="Family A G protein-coupled receptor-like"/>
    <property type="match status" value="1"/>
</dbReference>
<dbReference type="PROSITE" id="PS50262">
    <property type="entry name" value="G_PROTEIN_RECEP_F1_2"/>
    <property type="match status" value="1"/>
</dbReference>